<protein>
    <recommendedName>
        <fullName evidence="1">Large ribosomal subunit protein bL27</fullName>
    </recommendedName>
    <alternativeName>
        <fullName evidence="3">50S ribosomal protein L27</fullName>
    </alternativeName>
</protein>
<feature type="chain" id="PRO_1000081907" description="Large ribosomal subunit protein bL27">
    <location>
        <begin position="1"/>
        <end position="85"/>
    </location>
</feature>
<feature type="region of interest" description="Disordered" evidence="2">
    <location>
        <begin position="1"/>
        <end position="20"/>
    </location>
</feature>
<sequence>MAHKKAGGSTRNGRDSEAKRLGVKRFGGEAVLAGSIIVRQRGTKFHAGTNVGCGRDHTLFAKADGKVKFEVKGPKNRKYISIVAE</sequence>
<keyword id="KW-1185">Reference proteome</keyword>
<keyword id="KW-0687">Ribonucleoprotein</keyword>
<keyword id="KW-0689">Ribosomal protein</keyword>
<organism>
    <name type="scientific">Salmonella arizonae (strain ATCC BAA-731 / CDC346-86 / RSK2980)</name>
    <dbReference type="NCBI Taxonomy" id="41514"/>
    <lineage>
        <taxon>Bacteria</taxon>
        <taxon>Pseudomonadati</taxon>
        <taxon>Pseudomonadota</taxon>
        <taxon>Gammaproteobacteria</taxon>
        <taxon>Enterobacterales</taxon>
        <taxon>Enterobacteriaceae</taxon>
        <taxon>Salmonella</taxon>
    </lineage>
</organism>
<reference key="1">
    <citation type="submission" date="2007-11" db="EMBL/GenBank/DDBJ databases">
        <authorList>
            <consortium name="The Salmonella enterica serovar Arizonae Genome Sequencing Project"/>
            <person name="McClelland M."/>
            <person name="Sanderson E.K."/>
            <person name="Porwollik S."/>
            <person name="Spieth J."/>
            <person name="Clifton W.S."/>
            <person name="Fulton R."/>
            <person name="Chunyan W."/>
            <person name="Wollam A."/>
            <person name="Shah N."/>
            <person name="Pepin K."/>
            <person name="Bhonagiri V."/>
            <person name="Nash W."/>
            <person name="Johnson M."/>
            <person name="Thiruvilangam P."/>
            <person name="Wilson R."/>
        </authorList>
    </citation>
    <scope>NUCLEOTIDE SEQUENCE [LARGE SCALE GENOMIC DNA]</scope>
    <source>
        <strain>ATCC BAA-731 / CDC346-86 / RSK2980</strain>
    </source>
</reference>
<gene>
    <name evidence="1" type="primary">rpmA</name>
    <name type="ordered locus">SARI_04321</name>
</gene>
<proteinExistence type="inferred from homology"/>
<accession>A9MP21</accession>
<name>RL27_SALAR</name>
<comment type="similarity">
    <text evidence="1">Belongs to the bacterial ribosomal protein bL27 family.</text>
</comment>
<dbReference type="EMBL" id="CP000880">
    <property type="protein sequence ID" value="ABX24103.1"/>
    <property type="molecule type" value="Genomic_DNA"/>
</dbReference>
<dbReference type="SMR" id="A9MP21"/>
<dbReference type="STRING" id="41514.SARI_04321"/>
<dbReference type="KEGG" id="ses:SARI_04321"/>
<dbReference type="HOGENOM" id="CLU_095424_4_1_6"/>
<dbReference type="Proteomes" id="UP000002084">
    <property type="component" value="Chromosome"/>
</dbReference>
<dbReference type="GO" id="GO:0022625">
    <property type="term" value="C:cytosolic large ribosomal subunit"/>
    <property type="evidence" value="ECO:0007669"/>
    <property type="project" value="TreeGrafter"/>
</dbReference>
<dbReference type="GO" id="GO:0003735">
    <property type="term" value="F:structural constituent of ribosome"/>
    <property type="evidence" value="ECO:0007669"/>
    <property type="project" value="InterPro"/>
</dbReference>
<dbReference type="GO" id="GO:0006412">
    <property type="term" value="P:translation"/>
    <property type="evidence" value="ECO:0007669"/>
    <property type="project" value="UniProtKB-UniRule"/>
</dbReference>
<dbReference type="FunFam" id="2.40.50.100:FF:000001">
    <property type="entry name" value="50S ribosomal protein L27"/>
    <property type="match status" value="1"/>
</dbReference>
<dbReference type="Gene3D" id="2.40.50.100">
    <property type="match status" value="1"/>
</dbReference>
<dbReference type="HAMAP" id="MF_00539">
    <property type="entry name" value="Ribosomal_bL27"/>
    <property type="match status" value="1"/>
</dbReference>
<dbReference type="InterPro" id="IPR001684">
    <property type="entry name" value="Ribosomal_bL27"/>
</dbReference>
<dbReference type="InterPro" id="IPR018261">
    <property type="entry name" value="Ribosomal_bL27_CS"/>
</dbReference>
<dbReference type="NCBIfam" id="TIGR00062">
    <property type="entry name" value="L27"/>
    <property type="match status" value="1"/>
</dbReference>
<dbReference type="PANTHER" id="PTHR15893:SF0">
    <property type="entry name" value="LARGE RIBOSOMAL SUBUNIT PROTEIN BL27M"/>
    <property type="match status" value="1"/>
</dbReference>
<dbReference type="PANTHER" id="PTHR15893">
    <property type="entry name" value="RIBOSOMAL PROTEIN L27"/>
    <property type="match status" value="1"/>
</dbReference>
<dbReference type="Pfam" id="PF01016">
    <property type="entry name" value="Ribosomal_L27"/>
    <property type="match status" value="1"/>
</dbReference>
<dbReference type="PRINTS" id="PR00063">
    <property type="entry name" value="RIBOSOMALL27"/>
</dbReference>
<dbReference type="SUPFAM" id="SSF110324">
    <property type="entry name" value="Ribosomal L27 protein-like"/>
    <property type="match status" value="1"/>
</dbReference>
<dbReference type="PROSITE" id="PS00831">
    <property type="entry name" value="RIBOSOMAL_L27"/>
    <property type="match status" value="1"/>
</dbReference>
<evidence type="ECO:0000255" key="1">
    <source>
        <dbReference type="HAMAP-Rule" id="MF_00539"/>
    </source>
</evidence>
<evidence type="ECO:0000256" key="2">
    <source>
        <dbReference type="SAM" id="MobiDB-lite"/>
    </source>
</evidence>
<evidence type="ECO:0000305" key="3"/>